<reference evidence="5" key="1">
    <citation type="journal article" date="2005" name="Peptides">
        <title>Peptidomics of neurohemal organs from species of the cockroach family Blattidae: how do neuropeptides of closely related species differ?</title>
        <authorList>
            <person name="Predel R."/>
            <person name="Gaede G."/>
        </authorList>
    </citation>
    <scope>PROTEIN SEQUENCE</scope>
    <scope>MASS SPECTROMETRY</scope>
    <scope>AMIDATION AT LEU-14</scope>
    <source>
        <tissue evidence="3">Corpora allata</tissue>
    </source>
</reference>
<reference evidence="5" key="2">
    <citation type="submission" date="2004-11" db="UniProtKB">
        <authorList>
            <person name="Predel R."/>
            <person name="Gaede G."/>
        </authorList>
    </citation>
    <scope>SUBCELLULAR LOCATION</scope>
    <scope>TISSUE SPECIFICITY</scope>
</reference>
<name>PPK6_PERFU</name>
<feature type="peptide" id="PRO_0000044362" description="Pyrokinin-6">
    <location>
        <begin position="1"/>
        <end position="14"/>
    </location>
</feature>
<feature type="modified residue" description="Leucine amide" evidence="3">
    <location>
        <position position="14"/>
    </location>
</feature>
<organism>
    <name type="scientific">Periplaneta fuliginosa</name>
    <name type="common">Smokybrown cockroach</name>
    <name type="synonym">Dusky-brown cockroach</name>
    <dbReference type="NCBI Taxonomy" id="36977"/>
    <lineage>
        <taxon>Eukaryota</taxon>
        <taxon>Metazoa</taxon>
        <taxon>Ecdysozoa</taxon>
        <taxon>Arthropoda</taxon>
        <taxon>Hexapoda</taxon>
        <taxon>Insecta</taxon>
        <taxon>Pterygota</taxon>
        <taxon>Neoptera</taxon>
        <taxon>Polyneoptera</taxon>
        <taxon>Dictyoptera</taxon>
        <taxon>Blattodea</taxon>
        <taxon>Blattoidea</taxon>
        <taxon>Blattidae</taxon>
        <taxon>Blattinae</taxon>
        <taxon>Periplaneta</taxon>
    </lineage>
</organism>
<keyword id="KW-0027">Amidation</keyword>
<keyword id="KW-0903">Direct protein sequencing</keyword>
<keyword id="KW-0527">Neuropeptide</keyword>
<keyword id="KW-0964">Secreted</keyword>
<evidence type="ECO:0000250" key="1">
    <source>
        <dbReference type="UniProtKB" id="P82693"/>
    </source>
</evidence>
<evidence type="ECO:0000255" key="2"/>
<evidence type="ECO:0000269" key="3">
    <source>
    </source>
</evidence>
<evidence type="ECO:0000269" key="4">
    <source ref="2"/>
</evidence>
<evidence type="ECO:0000305" key="5"/>
<protein>
    <recommendedName>
        <fullName>Pyrokinin-6</fullName>
    </recommendedName>
    <alternativeName>
        <fullName>FXPRL-amide</fullName>
    </alternativeName>
</protein>
<proteinExistence type="evidence at protein level"/>
<sequence length="14" mass="1588">SDPEVPGMWFGPRL</sequence>
<accession>P84360</accession>
<comment type="function">
    <text evidence="1">Myoactive.</text>
</comment>
<comment type="subcellular location">
    <subcellularLocation>
        <location evidence="4">Secreted</location>
    </subcellularLocation>
</comment>
<comment type="tissue specificity">
    <text evidence="4">Expressed in the brain, subesophageal ganglion and in the retrocerebral complex (mainly corpora cardiaca).</text>
</comment>
<comment type="mass spectrometry" mass="1586.8" method="MALDI" evidence="3"/>
<comment type="similarity">
    <text evidence="2">Belongs to the pyrokinin family.</text>
</comment>
<dbReference type="GO" id="GO:0005576">
    <property type="term" value="C:extracellular region"/>
    <property type="evidence" value="ECO:0007669"/>
    <property type="project" value="UniProtKB-SubCell"/>
</dbReference>
<dbReference type="GO" id="GO:0005184">
    <property type="term" value="F:neuropeptide hormone activity"/>
    <property type="evidence" value="ECO:0007669"/>
    <property type="project" value="InterPro"/>
</dbReference>
<dbReference type="GO" id="GO:0007218">
    <property type="term" value="P:neuropeptide signaling pathway"/>
    <property type="evidence" value="ECO:0007669"/>
    <property type="project" value="UniProtKB-KW"/>
</dbReference>
<dbReference type="InterPro" id="IPR001484">
    <property type="entry name" value="Pyrokinin_CS"/>
</dbReference>
<dbReference type="PROSITE" id="PS00539">
    <property type="entry name" value="PYROKININ"/>
    <property type="match status" value="1"/>
</dbReference>